<name>FLHD_SHIBS</name>
<proteinExistence type="inferred from homology"/>
<protein>
    <recommendedName>
        <fullName evidence="1">Flagellar transcriptional regulator FlhD</fullName>
    </recommendedName>
</protein>
<feature type="chain" id="PRO_1000062102" description="Flagellar transcriptional regulator FlhD">
    <location>
        <begin position="1"/>
        <end position="119"/>
    </location>
</feature>
<feature type="disulfide bond" description="Interchain" evidence="1">
    <location>
        <position position="68"/>
    </location>
</feature>
<evidence type="ECO:0000255" key="1">
    <source>
        <dbReference type="HAMAP-Rule" id="MF_00725"/>
    </source>
</evidence>
<dbReference type="EMBL" id="CP000036">
    <property type="protein sequence ID" value="ABB65753.1"/>
    <property type="molecule type" value="Genomic_DNA"/>
</dbReference>
<dbReference type="SMR" id="Q322K5"/>
<dbReference type="KEGG" id="sbo:SBO_1114"/>
<dbReference type="HOGENOM" id="CLU_144160_0_0_6"/>
<dbReference type="Proteomes" id="UP000007067">
    <property type="component" value="Chromosome"/>
</dbReference>
<dbReference type="GO" id="GO:0005737">
    <property type="term" value="C:cytoplasm"/>
    <property type="evidence" value="ECO:0007669"/>
    <property type="project" value="UniProtKB-SubCell"/>
</dbReference>
<dbReference type="GO" id="GO:0003677">
    <property type="term" value="F:DNA binding"/>
    <property type="evidence" value="ECO:0007669"/>
    <property type="project" value="UniProtKB-UniRule"/>
</dbReference>
<dbReference type="GO" id="GO:0044780">
    <property type="term" value="P:bacterial-type flagellum assembly"/>
    <property type="evidence" value="ECO:0007669"/>
    <property type="project" value="InterPro"/>
</dbReference>
<dbReference type="GO" id="GO:0045893">
    <property type="term" value="P:positive regulation of DNA-templated transcription"/>
    <property type="evidence" value="ECO:0007669"/>
    <property type="project" value="InterPro"/>
</dbReference>
<dbReference type="GO" id="GO:1902208">
    <property type="term" value="P:regulation of bacterial-type flagellum assembly"/>
    <property type="evidence" value="ECO:0007669"/>
    <property type="project" value="UniProtKB-UniRule"/>
</dbReference>
<dbReference type="FunFam" id="1.10.4000.10:FF:000001">
    <property type="entry name" value="Flagellar transcriptional regulator FlhD"/>
    <property type="match status" value="1"/>
</dbReference>
<dbReference type="Gene3D" id="1.10.4000.10">
    <property type="entry name" value="Flagellar transcriptional activator FlhD"/>
    <property type="match status" value="1"/>
</dbReference>
<dbReference type="HAMAP" id="MF_00725">
    <property type="entry name" value="FlhD"/>
    <property type="match status" value="1"/>
</dbReference>
<dbReference type="InterPro" id="IPR023559">
    <property type="entry name" value="Flagellar_FlhD"/>
</dbReference>
<dbReference type="InterPro" id="IPR036194">
    <property type="entry name" value="FlhD_sf"/>
</dbReference>
<dbReference type="NCBIfam" id="NF002783">
    <property type="entry name" value="PRK02909.1-1"/>
    <property type="match status" value="1"/>
</dbReference>
<dbReference type="Pfam" id="PF05247">
    <property type="entry name" value="FlhD"/>
    <property type="match status" value="1"/>
</dbReference>
<dbReference type="SUPFAM" id="SSF63592">
    <property type="entry name" value="Flagellar transcriptional activator FlhD"/>
    <property type="match status" value="1"/>
</dbReference>
<keyword id="KW-0010">Activator</keyword>
<keyword id="KW-1005">Bacterial flagellum biogenesis</keyword>
<keyword id="KW-0963">Cytoplasm</keyword>
<keyword id="KW-1015">Disulfide bond</keyword>
<keyword id="KW-0238">DNA-binding</keyword>
<keyword id="KW-0804">Transcription</keyword>
<keyword id="KW-0805">Transcription regulation</keyword>
<reference key="1">
    <citation type="journal article" date="2005" name="Nucleic Acids Res.">
        <title>Genome dynamics and diversity of Shigella species, the etiologic agents of bacillary dysentery.</title>
        <authorList>
            <person name="Yang F."/>
            <person name="Yang J."/>
            <person name="Zhang X."/>
            <person name="Chen L."/>
            <person name="Jiang Y."/>
            <person name="Yan Y."/>
            <person name="Tang X."/>
            <person name="Wang J."/>
            <person name="Xiong Z."/>
            <person name="Dong J."/>
            <person name="Xue Y."/>
            <person name="Zhu Y."/>
            <person name="Xu X."/>
            <person name="Sun L."/>
            <person name="Chen S."/>
            <person name="Nie H."/>
            <person name="Peng J."/>
            <person name="Xu J."/>
            <person name="Wang Y."/>
            <person name="Yuan Z."/>
            <person name="Wen Y."/>
            <person name="Yao Z."/>
            <person name="Shen Y."/>
            <person name="Qiang B."/>
            <person name="Hou Y."/>
            <person name="Yu J."/>
            <person name="Jin Q."/>
        </authorList>
    </citation>
    <scope>NUCLEOTIDE SEQUENCE [LARGE SCALE GENOMIC DNA]</scope>
    <source>
        <strain>Sb227</strain>
    </source>
</reference>
<sequence length="119" mass="13617">MGIMHTSELLKHIYDINLSYLLLAQRLIVQDKASAMFRLGINEEMATTLAALTLPQMVKLAETNQLVCHFRFDSHQTITQLTQDSRVNDLQQIHTGIMLSTRLLNDVNQPEEALRKKRA</sequence>
<organism>
    <name type="scientific">Shigella boydii serotype 4 (strain Sb227)</name>
    <dbReference type="NCBI Taxonomy" id="300268"/>
    <lineage>
        <taxon>Bacteria</taxon>
        <taxon>Pseudomonadati</taxon>
        <taxon>Pseudomonadota</taxon>
        <taxon>Gammaproteobacteria</taxon>
        <taxon>Enterobacterales</taxon>
        <taxon>Enterobacteriaceae</taxon>
        <taxon>Shigella</taxon>
    </lineage>
</organism>
<accession>Q322K5</accession>
<comment type="function">
    <text evidence="1">Functions in complex with FlhC as a master transcriptional regulator that regulates transcription of several flagellar and non-flagellar operons by binding to their promoter region. Activates expression of class 2 flagellar genes, including fliA, which is a flagellum-specific sigma factor that turns on the class 3 genes. Also regulates genes whose products function in a variety of physiological pathways.</text>
</comment>
<comment type="subunit">
    <text evidence="1">Homodimer; disulfide-linked. Forms a heterohexamer composed of two FlhC and four FlhD subunits. Each FlhC binds a FlhD dimer, forming a heterotrimer, and a hexamer assembles by dimerization of two heterotrimers.</text>
</comment>
<comment type="subcellular location">
    <subcellularLocation>
        <location evidence="1">Cytoplasm</location>
    </subcellularLocation>
</comment>
<comment type="domain">
    <text evidence="1">The C-terminal region contains a putative helix-turn-helix (HTH) motif, suggesting that this region may bind DNA.</text>
</comment>
<comment type="similarity">
    <text evidence="1">Belongs to the FlhD family.</text>
</comment>
<gene>
    <name evidence="1" type="primary">flhD</name>
    <name type="ordered locus">SBO_1114</name>
</gene>